<sequence>MAPRAEKKPAEKKPAAEKPVEEKSKAEKAPAEKKPKAGKKLPKEAGAGGDKKKKMKKKSVETYKIYIFKVLKQVHPDIGISSKAMGIMNSFINDIFEKLASESSKLARYNKKPTITSREIQTAVRLVLPGELAKHAVSEGTKAVTKFTSS</sequence>
<organism>
    <name type="scientific">Arabidopsis thaliana</name>
    <name type="common">Mouse-ear cress</name>
    <dbReference type="NCBI Taxonomy" id="3702"/>
    <lineage>
        <taxon>Eukaryota</taxon>
        <taxon>Viridiplantae</taxon>
        <taxon>Streptophyta</taxon>
        <taxon>Embryophyta</taxon>
        <taxon>Tracheophyta</taxon>
        <taxon>Spermatophyta</taxon>
        <taxon>Magnoliopsida</taxon>
        <taxon>eudicotyledons</taxon>
        <taxon>Gunneridae</taxon>
        <taxon>Pentapetalae</taxon>
        <taxon>rosids</taxon>
        <taxon>malvids</taxon>
        <taxon>Brassicales</taxon>
        <taxon>Brassicaceae</taxon>
        <taxon>Camelineae</taxon>
        <taxon>Arabidopsis</taxon>
    </lineage>
</organism>
<comment type="function">
    <text>Core component of nucleosome. Nucleosomes wrap and compact DNA into chromatin, limiting DNA accessibility to the cellular machineries which require DNA as a template. Histones thereby play a central role in transcription regulation, DNA repair, DNA replication and chromosomal stability. DNA accessibility is regulated via a complex set of post-translational modifications of histones, also called histone code, and nucleosome remodeling.</text>
</comment>
<comment type="subunit">
    <text>The nucleosome is a histone octamer containing two molecules each of H2A, H2B, H3 and H4 assembled in one H3-H4 heterotetramer and two H2A-H2B heterodimers. The octamer wraps approximately 147 bp of DNA.</text>
</comment>
<comment type="subcellular location">
    <subcellularLocation>
        <location evidence="1">Nucleus</location>
    </subcellularLocation>
    <subcellularLocation>
        <location evidence="1">Chromosome</location>
    </subcellularLocation>
</comment>
<comment type="developmental stage">
    <text evidence="6">Strong up-regulation during the S-phase.</text>
</comment>
<comment type="PTM">
    <text evidence="5">Can be acetylated to form H2BK6ac, H2BK11ac, H2BK22ac, H2BK27ac H2BK33ac and H2BK34ac.</text>
</comment>
<comment type="PTM">
    <text evidence="5">Mono-, di- or trimethylated at the N-terminus to form H2BA1me1/2/3. H2BA1me2 may be acetylated to form H2BA1me2K6ac and H2BA1me2K6acK11ac.</text>
</comment>
<comment type="PTM">
    <text>Monoubiquitinated by BRE1 to form H2BK143ub1 and deubiquitinated by UBP26. Required for heterochromatic histone H3 di- and trimethylation at H3K4me. May give a specific tag for epigenetic transcriptional activation.</text>
</comment>
<comment type="similarity">
    <text evidence="7">Belongs to the histone H2B family.</text>
</comment>
<comment type="caution">
    <text evidence="7">To ensure consistency between histone entries, we follow the 'Brno' nomenclature for histone modifications, with positions referring to those used in the literature for the 'closest' model organism. Due to slight variations in histone sequences between organisms and to the presence of initiator methionine in UniProtKB/Swiss-Prot sequences, the actual positions of modified amino acids in the sequence generally differ. In this entry the following conventions are used: H2BA1me1/2/3 = mono-, di- and trimethylated Ala-2; H2BK6ac = acetylated Lys-7; H2BK11ac = acetylated Lys-12; H2BK22ac = acetylated Lys-28; H2BK27ac = acetylated Lys-33; H2BK33ac = acetylated Lys-39; H2BK34ac = acetylated Lys-40; H2BK143ub1 = monoubiquitinated Lys-146.</text>
</comment>
<dbReference type="EMBL" id="Y12576">
    <property type="protein sequence ID" value="CAA73156.1"/>
    <property type="molecule type" value="mRNA"/>
</dbReference>
<dbReference type="EMBL" id="AL162459">
    <property type="protein sequence ID" value="CAB82822.1"/>
    <property type="molecule type" value="Genomic_DNA"/>
</dbReference>
<dbReference type="EMBL" id="CP002686">
    <property type="protein sequence ID" value="AEE78097.1"/>
    <property type="molecule type" value="Genomic_DNA"/>
</dbReference>
<dbReference type="EMBL" id="BT006400">
    <property type="protein sequence ID" value="AAP21208.1"/>
    <property type="molecule type" value="mRNA"/>
</dbReference>
<dbReference type="EMBL" id="AY087219">
    <property type="protein sequence ID" value="AAM64775.1"/>
    <property type="molecule type" value="mRNA"/>
</dbReference>
<dbReference type="PIR" id="T47538">
    <property type="entry name" value="T47538"/>
</dbReference>
<dbReference type="RefSeq" id="NP_190184.1">
    <property type="nucleotide sequence ID" value="NM_114467.4"/>
</dbReference>
<dbReference type="PDB" id="7UX9">
    <property type="method" value="EM"/>
    <property type="resolution" value="3.20 A"/>
    <property type="chains" value="C/D=1-150"/>
</dbReference>
<dbReference type="PDB" id="8J90">
    <property type="method" value="EM"/>
    <property type="resolution" value="4.71 A"/>
    <property type="chains" value="D/H=1-150"/>
</dbReference>
<dbReference type="PDB" id="8J91">
    <property type="method" value="EM"/>
    <property type="resolution" value="2.90 A"/>
    <property type="chains" value="D/H=1-150"/>
</dbReference>
<dbReference type="PDB" id="8J92">
    <property type="method" value="EM"/>
    <property type="resolution" value="2.90 A"/>
    <property type="chains" value="D/H=1-150"/>
</dbReference>
<dbReference type="PDB" id="8WH5">
    <property type="method" value="EM"/>
    <property type="resolution" value="3.58 A"/>
    <property type="chains" value="D/H=1-150"/>
</dbReference>
<dbReference type="PDB" id="8WH8">
    <property type="method" value="EM"/>
    <property type="resolution" value="3.60 A"/>
    <property type="chains" value="D/H=1-150"/>
</dbReference>
<dbReference type="PDB" id="8WH9">
    <property type="method" value="EM"/>
    <property type="resolution" value="3.31 A"/>
    <property type="chains" value="D/H=1-150"/>
</dbReference>
<dbReference type="PDB" id="8WHA">
    <property type="method" value="EM"/>
    <property type="resolution" value="4.05 A"/>
    <property type="chains" value="D/H=1-150"/>
</dbReference>
<dbReference type="PDB" id="8WHB">
    <property type="method" value="EM"/>
    <property type="resolution" value="3.17 A"/>
    <property type="chains" value="D/H=1-150"/>
</dbReference>
<dbReference type="PDBsum" id="7UX9"/>
<dbReference type="PDBsum" id="8J90"/>
<dbReference type="PDBsum" id="8J91"/>
<dbReference type="PDBsum" id="8J92"/>
<dbReference type="PDBsum" id="8WH5"/>
<dbReference type="PDBsum" id="8WH8"/>
<dbReference type="PDBsum" id="8WH9"/>
<dbReference type="PDBsum" id="8WHA"/>
<dbReference type="PDBsum" id="8WHB"/>
<dbReference type="EMDB" id="EMD-36083"/>
<dbReference type="EMDB" id="EMD-36084"/>
<dbReference type="EMDB" id="EMD-36085"/>
<dbReference type="EMDB" id="EMD-37529"/>
<dbReference type="EMDB" id="EMD-37533"/>
<dbReference type="EMDB" id="EMD-37535"/>
<dbReference type="EMDB" id="EMD-37537"/>
<dbReference type="EMDB" id="EMD-37538"/>
<dbReference type="SMR" id="O23629"/>
<dbReference type="BioGRID" id="9061">
    <property type="interactions" value="2"/>
</dbReference>
<dbReference type="FunCoup" id="O23629">
    <property type="interactions" value="2312"/>
</dbReference>
<dbReference type="IntAct" id="O23629">
    <property type="interactions" value="1"/>
</dbReference>
<dbReference type="STRING" id="3702.O23629"/>
<dbReference type="iPTMnet" id="O23629"/>
<dbReference type="PaxDb" id="3702-AT3G45980.1"/>
<dbReference type="ProteomicsDB" id="222373"/>
<dbReference type="EnsemblPlants" id="AT3G45980.1">
    <property type="protein sequence ID" value="AT3G45980.1"/>
    <property type="gene ID" value="AT3G45980"/>
</dbReference>
<dbReference type="GeneID" id="823741"/>
<dbReference type="Gramene" id="AT3G45980.1">
    <property type="protein sequence ID" value="AT3G45980.1"/>
    <property type="gene ID" value="AT3G45980"/>
</dbReference>
<dbReference type="KEGG" id="ath:AT3G45980"/>
<dbReference type="Araport" id="AT3G45980"/>
<dbReference type="TAIR" id="AT3G45980">
    <property type="gene designation" value="HTB9"/>
</dbReference>
<dbReference type="eggNOG" id="KOG1744">
    <property type="taxonomic scope" value="Eukaryota"/>
</dbReference>
<dbReference type="HOGENOM" id="CLU_075666_1_0_1"/>
<dbReference type="InParanoid" id="O23629"/>
<dbReference type="OMA" id="FDNIPEQ"/>
<dbReference type="OrthoDB" id="1913820at2759"/>
<dbReference type="PhylomeDB" id="O23629"/>
<dbReference type="PRO" id="PR:O23629"/>
<dbReference type="Proteomes" id="UP000006548">
    <property type="component" value="Chromosome 3"/>
</dbReference>
<dbReference type="ExpressionAtlas" id="O23629">
    <property type="expression patterns" value="baseline and differential"/>
</dbReference>
<dbReference type="GO" id="GO:0009570">
    <property type="term" value="C:chloroplast stroma"/>
    <property type="evidence" value="ECO:0007005"/>
    <property type="project" value="TAIR"/>
</dbReference>
<dbReference type="GO" id="GO:0009534">
    <property type="term" value="C:chloroplast thylakoid"/>
    <property type="evidence" value="ECO:0007005"/>
    <property type="project" value="TAIR"/>
</dbReference>
<dbReference type="GO" id="GO:0005829">
    <property type="term" value="C:cytosol"/>
    <property type="evidence" value="ECO:0007005"/>
    <property type="project" value="TAIR"/>
</dbReference>
<dbReference type="GO" id="GO:0005730">
    <property type="term" value="C:nucleolus"/>
    <property type="evidence" value="ECO:0007005"/>
    <property type="project" value="TAIR"/>
</dbReference>
<dbReference type="GO" id="GO:0000786">
    <property type="term" value="C:nucleosome"/>
    <property type="evidence" value="ECO:0007669"/>
    <property type="project" value="UniProtKB-KW"/>
</dbReference>
<dbReference type="GO" id="GO:0003677">
    <property type="term" value="F:DNA binding"/>
    <property type="evidence" value="ECO:0007669"/>
    <property type="project" value="UniProtKB-KW"/>
</dbReference>
<dbReference type="GO" id="GO:0046982">
    <property type="term" value="F:protein heterodimerization activity"/>
    <property type="evidence" value="ECO:0007669"/>
    <property type="project" value="InterPro"/>
</dbReference>
<dbReference type="GO" id="GO:0030527">
    <property type="term" value="F:structural constituent of chromatin"/>
    <property type="evidence" value="ECO:0007669"/>
    <property type="project" value="InterPro"/>
</dbReference>
<dbReference type="CDD" id="cd22910">
    <property type="entry name" value="HFD_H2B"/>
    <property type="match status" value="1"/>
</dbReference>
<dbReference type="FunFam" id="1.10.20.10:FF:000014">
    <property type="entry name" value="Histone H2B"/>
    <property type="match status" value="1"/>
</dbReference>
<dbReference type="Gene3D" id="1.10.20.10">
    <property type="entry name" value="Histone, subunit A"/>
    <property type="match status" value="1"/>
</dbReference>
<dbReference type="InterPro" id="IPR009072">
    <property type="entry name" value="Histone-fold"/>
</dbReference>
<dbReference type="InterPro" id="IPR007125">
    <property type="entry name" value="Histone_H2A/H2B/H3"/>
</dbReference>
<dbReference type="InterPro" id="IPR000558">
    <property type="entry name" value="Histone_H2B"/>
</dbReference>
<dbReference type="InterPro" id="IPR055333">
    <property type="entry name" value="HISTONE_H2B_site"/>
</dbReference>
<dbReference type="PANTHER" id="PTHR23428">
    <property type="entry name" value="HISTONE H2B"/>
    <property type="match status" value="1"/>
</dbReference>
<dbReference type="Pfam" id="PF00125">
    <property type="entry name" value="Histone"/>
    <property type="match status" value="1"/>
</dbReference>
<dbReference type="PRINTS" id="PR00621">
    <property type="entry name" value="HISTONEH2B"/>
</dbReference>
<dbReference type="SMART" id="SM00427">
    <property type="entry name" value="H2B"/>
    <property type="match status" value="1"/>
</dbReference>
<dbReference type="SUPFAM" id="SSF47113">
    <property type="entry name" value="Histone-fold"/>
    <property type="match status" value="1"/>
</dbReference>
<dbReference type="PROSITE" id="PS00357">
    <property type="entry name" value="HISTONE_H2B"/>
    <property type="match status" value="1"/>
</dbReference>
<protein>
    <recommendedName>
        <fullName>Histone H2B.6</fullName>
    </recommendedName>
    <alternativeName>
        <fullName>H2BAt</fullName>
    </alternativeName>
    <alternativeName>
        <fullName>HTB9</fullName>
    </alternativeName>
</protein>
<keyword id="KW-0002">3D-structure</keyword>
<keyword id="KW-0007">Acetylation</keyword>
<keyword id="KW-0158">Chromosome</keyword>
<keyword id="KW-0238">DNA-binding</keyword>
<keyword id="KW-1017">Isopeptide bond</keyword>
<keyword id="KW-0488">Methylation</keyword>
<keyword id="KW-0544">Nucleosome core</keyword>
<keyword id="KW-0539">Nucleus</keyword>
<keyword id="KW-1185">Reference proteome</keyword>
<keyword id="KW-0832">Ubl conjugation</keyword>
<accession>O23629</accession>
<name>H2B6_ARATH</name>
<evidence type="ECO:0000250" key="1"/>
<evidence type="ECO:0000250" key="2">
    <source>
        <dbReference type="UniProtKB" id="Q9FFC0"/>
    </source>
</evidence>
<evidence type="ECO:0000250" key="3">
    <source>
        <dbReference type="UniProtKB" id="Q9LQQ4"/>
    </source>
</evidence>
<evidence type="ECO:0000256" key="4">
    <source>
        <dbReference type="SAM" id="MobiDB-lite"/>
    </source>
</evidence>
<evidence type="ECO:0000269" key="5">
    <source>
    </source>
</evidence>
<evidence type="ECO:0000269" key="6">
    <source>
    </source>
</evidence>
<evidence type="ECO:0000305" key="7"/>
<evidence type="ECO:0007829" key="8">
    <source>
        <dbReference type="PDB" id="8J91"/>
    </source>
</evidence>
<feature type="initiator methionine" description="Removed" evidence="7">
    <location>
        <position position="1"/>
    </location>
</feature>
<feature type="chain" id="PRO_0000238693" description="Histone H2B.6">
    <location>
        <begin position="2"/>
        <end position="150"/>
    </location>
</feature>
<feature type="region of interest" description="Disordered" evidence="4">
    <location>
        <begin position="1"/>
        <end position="58"/>
    </location>
</feature>
<feature type="compositionally biased region" description="Basic and acidic residues" evidence="4">
    <location>
        <begin position="1"/>
        <end position="35"/>
    </location>
</feature>
<feature type="modified residue" description="N,N,N-trimethylalanine; alternate" evidence="5">
    <location>
        <position position="2"/>
    </location>
</feature>
<feature type="modified residue" description="N,N-dimethylalanine; alternate" evidence="5">
    <location>
        <position position="2"/>
    </location>
</feature>
<feature type="modified residue" description="N-methylalanine; alternate" evidence="5">
    <location>
        <position position="2"/>
    </location>
</feature>
<feature type="modified residue" description="N6-acetyllysine" evidence="5">
    <location>
        <position position="7"/>
    </location>
</feature>
<feature type="modified residue" description="N6-acetyllysine" evidence="5">
    <location>
        <position position="12"/>
    </location>
</feature>
<feature type="modified residue" description="N6,N6-dimethyllysine" evidence="2">
    <location>
        <position position="13"/>
    </location>
</feature>
<feature type="modified residue" description="N6-acetyllysine" evidence="5">
    <location>
        <position position="28"/>
    </location>
</feature>
<feature type="modified residue" description="N6-acetyllysine" evidence="5">
    <location>
        <position position="33"/>
    </location>
</feature>
<feature type="modified residue" description="N6-acetyllysine" evidence="5">
    <location>
        <position position="39"/>
    </location>
</feature>
<feature type="modified residue" description="N6-acetyllysine; partial" evidence="5">
    <location>
        <position position="40"/>
    </location>
</feature>
<feature type="cross-link" description="Glycyl lysine isopeptide (Lys-Gly) (interchain with G-Cter in ubiquitin)" evidence="3">
    <location>
        <position position="146"/>
    </location>
</feature>
<feature type="helix" evidence="8">
    <location>
        <begin position="65"/>
        <end position="74"/>
    </location>
</feature>
<feature type="helix" evidence="8">
    <location>
        <begin position="82"/>
        <end position="108"/>
    </location>
</feature>
<feature type="turn" evidence="8">
    <location>
        <begin position="109"/>
        <end position="111"/>
    </location>
</feature>
<feature type="helix" evidence="8">
    <location>
        <begin position="117"/>
        <end position="127"/>
    </location>
</feature>
<feature type="helix" evidence="8">
    <location>
        <begin position="130"/>
        <end position="149"/>
    </location>
</feature>
<gene>
    <name type="primary">H2B</name>
    <name type="ordered locus">At3g45980</name>
    <name type="ORF">F16L2.190</name>
</gene>
<reference key="1">
    <citation type="journal article" date="1997" name="Plant Physiol.">
        <title>Identification of proliferation-induced genes in Arabidopsis thaliana. Characterization of a new member of the highly evolutionarily conserved histone H2A.F/Z variant subfamily.</title>
        <authorList>
            <person name="Callard D."/>
            <person name="Mazzolini L."/>
        </authorList>
    </citation>
    <scope>NUCLEOTIDE SEQUENCE [MRNA]</scope>
    <scope>DEVELOPMENTAL STAGE</scope>
</reference>
<reference key="2">
    <citation type="journal article" date="2000" name="Nature">
        <title>Sequence and analysis of chromosome 3 of the plant Arabidopsis thaliana.</title>
        <authorList>
            <person name="Salanoubat M."/>
            <person name="Lemcke K."/>
            <person name="Rieger M."/>
            <person name="Ansorge W."/>
            <person name="Unseld M."/>
            <person name="Fartmann B."/>
            <person name="Valle G."/>
            <person name="Bloecker H."/>
            <person name="Perez-Alonso M."/>
            <person name="Obermaier B."/>
            <person name="Delseny M."/>
            <person name="Boutry M."/>
            <person name="Grivell L.A."/>
            <person name="Mache R."/>
            <person name="Puigdomenech P."/>
            <person name="De Simone V."/>
            <person name="Choisne N."/>
            <person name="Artiguenave F."/>
            <person name="Robert C."/>
            <person name="Brottier P."/>
            <person name="Wincker P."/>
            <person name="Cattolico L."/>
            <person name="Weissenbach J."/>
            <person name="Saurin W."/>
            <person name="Quetier F."/>
            <person name="Schaefer M."/>
            <person name="Mueller-Auer S."/>
            <person name="Gabel C."/>
            <person name="Fuchs M."/>
            <person name="Benes V."/>
            <person name="Wurmbach E."/>
            <person name="Drzonek H."/>
            <person name="Erfle H."/>
            <person name="Jordan N."/>
            <person name="Bangert S."/>
            <person name="Wiedelmann R."/>
            <person name="Kranz H."/>
            <person name="Voss H."/>
            <person name="Holland R."/>
            <person name="Brandt P."/>
            <person name="Nyakatura G."/>
            <person name="Vezzi A."/>
            <person name="D'Angelo M."/>
            <person name="Pallavicini A."/>
            <person name="Toppo S."/>
            <person name="Simionati B."/>
            <person name="Conrad A."/>
            <person name="Hornischer K."/>
            <person name="Kauer G."/>
            <person name="Loehnert T.-H."/>
            <person name="Nordsiek G."/>
            <person name="Reichelt J."/>
            <person name="Scharfe M."/>
            <person name="Schoen O."/>
            <person name="Bargues M."/>
            <person name="Terol J."/>
            <person name="Climent J."/>
            <person name="Navarro P."/>
            <person name="Collado C."/>
            <person name="Perez-Perez A."/>
            <person name="Ottenwaelder B."/>
            <person name="Duchemin D."/>
            <person name="Cooke R."/>
            <person name="Laudie M."/>
            <person name="Berger-Llauro C."/>
            <person name="Purnelle B."/>
            <person name="Masuy D."/>
            <person name="de Haan M."/>
            <person name="Maarse A.C."/>
            <person name="Alcaraz J.-P."/>
            <person name="Cottet A."/>
            <person name="Casacuberta E."/>
            <person name="Monfort A."/>
            <person name="Argiriou A."/>
            <person name="Flores M."/>
            <person name="Liguori R."/>
            <person name="Vitale D."/>
            <person name="Mannhaupt G."/>
            <person name="Haase D."/>
            <person name="Schoof H."/>
            <person name="Rudd S."/>
            <person name="Zaccaria P."/>
            <person name="Mewes H.-W."/>
            <person name="Mayer K.F.X."/>
            <person name="Kaul S."/>
            <person name="Town C.D."/>
            <person name="Koo H.L."/>
            <person name="Tallon L.J."/>
            <person name="Jenkins J."/>
            <person name="Rooney T."/>
            <person name="Rizzo M."/>
            <person name="Walts A."/>
            <person name="Utterback T."/>
            <person name="Fujii C.Y."/>
            <person name="Shea T.P."/>
            <person name="Creasy T.H."/>
            <person name="Haas B."/>
            <person name="Maiti R."/>
            <person name="Wu D."/>
            <person name="Peterson J."/>
            <person name="Van Aken S."/>
            <person name="Pai G."/>
            <person name="Militscher J."/>
            <person name="Sellers P."/>
            <person name="Gill J.E."/>
            <person name="Feldblyum T.V."/>
            <person name="Preuss D."/>
            <person name="Lin X."/>
            <person name="Nierman W.C."/>
            <person name="Salzberg S.L."/>
            <person name="White O."/>
            <person name="Venter J.C."/>
            <person name="Fraser C.M."/>
            <person name="Kaneko T."/>
            <person name="Nakamura Y."/>
            <person name="Sato S."/>
            <person name="Kato T."/>
            <person name="Asamizu E."/>
            <person name="Sasamoto S."/>
            <person name="Kimura T."/>
            <person name="Idesawa K."/>
            <person name="Kawashima K."/>
            <person name="Kishida Y."/>
            <person name="Kiyokawa C."/>
            <person name="Kohara M."/>
            <person name="Matsumoto M."/>
            <person name="Matsuno A."/>
            <person name="Muraki A."/>
            <person name="Nakayama S."/>
            <person name="Nakazaki N."/>
            <person name="Shinpo S."/>
            <person name="Takeuchi C."/>
            <person name="Wada T."/>
            <person name="Watanabe A."/>
            <person name="Yamada M."/>
            <person name="Yasuda M."/>
            <person name="Tabata S."/>
        </authorList>
    </citation>
    <scope>NUCLEOTIDE SEQUENCE [LARGE SCALE GENOMIC DNA]</scope>
    <source>
        <strain>cv. Columbia</strain>
    </source>
</reference>
<reference key="3">
    <citation type="journal article" date="2017" name="Plant J.">
        <title>Araport11: a complete reannotation of the Arabidopsis thaliana reference genome.</title>
        <authorList>
            <person name="Cheng C.Y."/>
            <person name="Krishnakumar V."/>
            <person name="Chan A.P."/>
            <person name="Thibaud-Nissen F."/>
            <person name="Schobel S."/>
            <person name="Town C.D."/>
        </authorList>
    </citation>
    <scope>GENOME REANNOTATION</scope>
    <source>
        <strain>cv. Columbia</strain>
    </source>
</reference>
<reference key="4">
    <citation type="journal article" date="2003" name="Science">
        <title>Empirical analysis of transcriptional activity in the Arabidopsis genome.</title>
        <authorList>
            <person name="Yamada K."/>
            <person name="Lim J."/>
            <person name="Dale J.M."/>
            <person name="Chen H."/>
            <person name="Shinn P."/>
            <person name="Palm C.J."/>
            <person name="Southwick A.M."/>
            <person name="Wu H.C."/>
            <person name="Kim C.J."/>
            <person name="Nguyen M."/>
            <person name="Pham P.K."/>
            <person name="Cheuk R.F."/>
            <person name="Karlin-Newmann G."/>
            <person name="Liu S.X."/>
            <person name="Lam B."/>
            <person name="Sakano H."/>
            <person name="Wu T."/>
            <person name="Yu G."/>
            <person name="Miranda M."/>
            <person name="Quach H.L."/>
            <person name="Tripp M."/>
            <person name="Chang C.H."/>
            <person name="Lee J.M."/>
            <person name="Toriumi M.J."/>
            <person name="Chan M.M."/>
            <person name="Tang C.C."/>
            <person name="Onodera C.S."/>
            <person name="Deng J.M."/>
            <person name="Akiyama K."/>
            <person name="Ansari Y."/>
            <person name="Arakawa T."/>
            <person name="Banh J."/>
            <person name="Banno F."/>
            <person name="Bowser L."/>
            <person name="Brooks S.Y."/>
            <person name="Carninci P."/>
            <person name="Chao Q."/>
            <person name="Choy N."/>
            <person name="Enju A."/>
            <person name="Goldsmith A.D."/>
            <person name="Gurjal M."/>
            <person name="Hansen N.F."/>
            <person name="Hayashizaki Y."/>
            <person name="Johnson-Hopson C."/>
            <person name="Hsuan V.W."/>
            <person name="Iida K."/>
            <person name="Karnes M."/>
            <person name="Khan S."/>
            <person name="Koesema E."/>
            <person name="Ishida J."/>
            <person name="Jiang P.X."/>
            <person name="Jones T."/>
            <person name="Kawai J."/>
            <person name="Kamiya A."/>
            <person name="Meyers C."/>
            <person name="Nakajima M."/>
            <person name="Narusaka M."/>
            <person name="Seki M."/>
            <person name="Sakurai T."/>
            <person name="Satou M."/>
            <person name="Tamse R."/>
            <person name="Vaysberg M."/>
            <person name="Wallender E.K."/>
            <person name="Wong C."/>
            <person name="Yamamura Y."/>
            <person name="Yuan S."/>
            <person name="Shinozaki K."/>
            <person name="Davis R.W."/>
            <person name="Theologis A."/>
            <person name="Ecker J.R."/>
        </authorList>
    </citation>
    <scope>NUCLEOTIDE SEQUENCE [LARGE SCALE MRNA]</scope>
    <source>
        <strain>cv. Columbia</strain>
    </source>
</reference>
<reference key="5">
    <citation type="submission" date="2002-03" db="EMBL/GenBank/DDBJ databases">
        <title>Full-length cDNA from Arabidopsis thaliana.</title>
        <authorList>
            <person name="Brover V.V."/>
            <person name="Troukhan M.E."/>
            <person name="Alexandrov N.A."/>
            <person name="Lu Y.-P."/>
            <person name="Flavell R.B."/>
            <person name="Feldmann K.A."/>
        </authorList>
    </citation>
    <scope>NUCLEOTIDE SEQUENCE [LARGE SCALE MRNA]</scope>
</reference>
<reference key="6">
    <citation type="journal article" date="2007" name="Nature">
        <title>Control of DNA methylation and heterochromatic silencing by histone H2B deubiquitination.</title>
        <authorList>
            <person name="Sridhar V.V."/>
            <person name="Kapoor A."/>
            <person name="Zhang K."/>
            <person name="Zhu J."/>
            <person name="Zhou T."/>
            <person name="Hasegawa P.M."/>
            <person name="Bressan R.A."/>
            <person name="Zhu J.-K."/>
        </authorList>
    </citation>
    <scope>UBIQUITINATION AT LYS-146</scope>
    <scope>IDENTIFICATION BY MASS SPECTROMETRY</scope>
</reference>
<reference key="7">
    <citation type="journal article" date="2007" name="J. Proteome Res.">
        <title>Characterization of post-translational modifications of histone H2B-variants isolated from Arabidopsis thaliana.</title>
        <authorList>
            <person name="Bergmueller E."/>
            <person name="Gehrig P.M."/>
            <person name="Gruissem W."/>
        </authorList>
    </citation>
    <scope>ACETYLATION AT LYS-7; LYS-12; LYS-28; LYS-33; LYS-39 AND LYS-40</scope>
    <scope>METHYLATION AT ALA-2</scope>
    <scope>UBIQUITINATION AT LYS-146</scope>
    <scope>IDENTIFICATION BY MASS SPECTROMETRY</scope>
</reference>
<proteinExistence type="evidence at protein level"/>